<proteinExistence type="inferred from homology"/>
<accession>A9ND24</accession>
<comment type="function">
    <text evidence="1">Formation of pseudouridine at positions 38, 39 and 40 in the anticodon stem and loop of transfer RNAs.</text>
</comment>
<comment type="catalytic activity">
    <reaction evidence="1">
        <text>uridine(38/39/40) in tRNA = pseudouridine(38/39/40) in tRNA</text>
        <dbReference type="Rhea" id="RHEA:22376"/>
        <dbReference type="Rhea" id="RHEA-COMP:10085"/>
        <dbReference type="Rhea" id="RHEA-COMP:10087"/>
        <dbReference type="ChEBI" id="CHEBI:65314"/>
        <dbReference type="ChEBI" id="CHEBI:65315"/>
        <dbReference type="EC" id="5.4.99.12"/>
    </reaction>
</comment>
<comment type="subunit">
    <text evidence="1">Homodimer.</text>
</comment>
<comment type="similarity">
    <text evidence="1">Belongs to the tRNA pseudouridine synthase TruA family.</text>
</comment>
<gene>
    <name evidence="1" type="primary">truA</name>
    <name type="ordered locus">COXBURSA331_A1055</name>
</gene>
<evidence type="ECO:0000255" key="1">
    <source>
        <dbReference type="HAMAP-Rule" id="MF_00171"/>
    </source>
</evidence>
<reference key="1">
    <citation type="submission" date="2007-11" db="EMBL/GenBank/DDBJ databases">
        <title>Genome sequencing of phylogenetically and phenotypically diverse Coxiella burnetii isolates.</title>
        <authorList>
            <person name="Seshadri R."/>
            <person name="Samuel J.E."/>
        </authorList>
    </citation>
    <scope>NUCLEOTIDE SEQUENCE [LARGE SCALE GENOMIC DNA]</scope>
    <source>
        <strain>RSA 331 / Henzerling II</strain>
    </source>
</reference>
<protein>
    <recommendedName>
        <fullName evidence="1">tRNA pseudouridine synthase A</fullName>
        <ecNumber evidence="1">5.4.99.12</ecNumber>
    </recommendedName>
    <alternativeName>
        <fullName evidence="1">tRNA pseudouridine(38-40) synthase</fullName>
    </alternativeName>
    <alternativeName>
        <fullName evidence="1">tRNA pseudouridylate synthase I</fullName>
    </alternativeName>
    <alternativeName>
        <fullName evidence="1">tRNA-uridine isomerase I</fullName>
    </alternativeName>
</protein>
<sequence>MARIALGIRYDGSAYHGWQVQEALKTVQGEVEKALSAVANHPVFVTCAGRTDAGVHASAQVAHFDTTAYRSDHAWVFGANSNLPHDISILWAKAVEEDFHARYSAMARRYRYIVYNHEIRPAILRKAIGWHYRPLDEKRMQAGAQYLIGEHDFSSFQGAGCQSRTPVRKIFQIEIYRIRRMVVIEVQANAFLLHMVRNIAGVLIAIGSGEKHPDWAQTVLKAKDRRQGGVTVPPNGLYLVEVNYPPNFKLPRMPLGPFFLP</sequence>
<keyword id="KW-0413">Isomerase</keyword>
<keyword id="KW-0819">tRNA processing</keyword>
<feature type="chain" id="PRO_1000194544" description="tRNA pseudouridine synthase A">
    <location>
        <begin position="1"/>
        <end position="261"/>
    </location>
</feature>
<feature type="active site" description="Nucleophile" evidence="1">
    <location>
        <position position="52"/>
    </location>
</feature>
<feature type="binding site" evidence="1">
    <location>
        <position position="110"/>
    </location>
    <ligand>
        <name>substrate</name>
    </ligand>
</feature>
<dbReference type="EC" id="5.4.99.12" evidence="1"/>
<dbReference type="EMBL" id="CP000890">
    <property type="protein sequence ID" value="ABX77668.1"/>
    <property type="molecule type" value="Genomic_DNA"/>
</dbReference>
<dbReference type="RefSeq" id="WP_005768766.1">
    <property type="nucleotide sequence ID" value="NC_010117.1"/>
</dbReference>
<dbReference type="SMR" id="A9ND24"/>
<dbReference type="KEGG" id="cbs:COXBURSA331_A1055"/>
<dbReference type="HOGENOM" id="CLU_014673_0_2_6"/>
<dbReference type="GO" id="GO:0003723">
    <property type="term" value="F:RNA binding"/>
    <property type="evidence" value="ECO:0007669"/>
    <property type="project" value="InterPro"/>
</dbReference>
<dbReference type="GO" id="GO:0160147">
    <property type="term" value="F:tRNA pseudouridine(38-40) synthase activity"/>
    <property type="evidence" value="ECO:0007669"/>
    <property type="project" value="UniProtKB-EC"/>
</dbReference>
<dbReference type="GO" id="GO:0031119">
    <property type="term" value="P:tRNA pseudouridine synthesis"/>
    <property type="evidence" value="ECO:0007669"/>
    <property type="project" value="UniProtKB-UniRule"/>
</dbReference>
<dbReference type="CDD" id="cd02570">
    <property type="entry name" value="PseudoU_synth_EcTruA"/>
    <property type="match status" value="1"/>
</dbReference>
<dbReference type="FunFam" id="3.30.70.580:FF:000001">
    <property type="entry name" value="tRNA pseudouridine synthase A"/>
    <property type="match status" value="1"/>
</dbReference>
<dbReference type="Gene3D" id="3.30.70.660">
    <property type="entry name" value="Pseudouridine synthase I, catalytic domain, C-terminal subdomain"/>
    <property type="match status" value="1"/>
</dbReference>
<dbReference type="Gene3D" id="3.30.70.580">
    <property type="entry name" value="Pseudouridine synthase I, catalytic domain, N-terminal subdomain"/>
    <property type="match status" value="1"/>
</dbReference>
<dbReference type="HAMAP" id="MF_00171">
    <property type="entry name" value="TruA"/>
    <property type="match status" value="1"/>
</dbReference>
<dbReference type="InterPro" id="IPR020103">
    <property type="entry name" value="PsdUridine_synth_cat_dom_sf"/>
</dbReference>
<dbReference type="InterPro" id="IPR001406">
    <property type="entry name" value="PsdUridine_synth_TruA"/>
</dbReference>
<dbReference type="InterPro" id="IPR020097">
    <property type="entry name" value="PsdUridine_synth_TruA_a/b_dom"/>
</dbReference>
<dbReference type="InterPro" id="IPR020095">
    <property type="entry name" value="PsdUridine_synth_TruA_C"/>
</dbReference>
<dbReference type="InterPro" id="IPR020094">
    <property type="entry name" value="TruA/RsuA/RluB/E/F_N"/>
</dbReference>
<dbReference type="NCBIfam" id="TIGR00071">
    <property type="entry name" value="hisT_truA"/>
    <property type="match status" value="1"/>
</dbReference>
<dbReference type="PANTHER" id="PTHR11142">
    <property type="entry name" value="PSEUDOURIDYLATE SYNTHASE"/>
    <property type="match status" value="1"/>
</dbReference>
<dbReference type="PANTHER" id="PTHR11142:SF0">
    <property type="entry name" value="TRNA PSEUDOURIDINE SYNTHASE-LIKE 1"/>
    <property type="match status" value="1"/>
</dbReference>
<dbReference type="Pfam" id="PF01416">
    <property type="entry name" value="PseudoU_synth_1"/>
    <property type="match status" value="2"/>
</dbReference>
<dbReference type="PIRSF" id="PIRSF001430">
    <property type="entry name" value="tRNA_psdUrid_synth"/>
    <property type="match status" value="1"/>
</dbReference>
<dbReference type="SUPFAM" id="SSF55120">
    <property type="entry name" value="Pseudouridine synthase"/>
    <property type="match status" value="1"/>
</dbReference>
<organism>
    <name type="scientific">Coxiella burnetii (strain RSA 331 / Henzerling II)</name>
    <dbReference type="NCBI Taxonomy" id="360115"/>
    <lineage>
        <taxon>Bacteria</taxon>
        <taxon>Pseudomonadati</taxon>
        <taxon>Pseudomonadota</taxon>
        <taxon>Gammaproteobacteria</taxon>
        <taxon>Legionellales</taxon>
        <taxon>Coxiellaceae</taxon>
        <taxon>Coxiella</taxon>
    </lineage>
</organism>
<name>TRUA_COXBR</name>